<proteinExistence type="evidence at protein level"/>
<feature type="initiator methionine" description="Removed" evidence="5 9">
    <location>
        <position position="1"/>
    </location>
</feature>
<feature type="chain" id="PRO_0000193734" description="AP-2 complex subunit alpha-2">
    <location>
        <begin position="2"/>
        <end position="938"/>
    </location>
</feature>
<feature type="region of interest" description="Disordered" evidence="4">
    <location>
        <begin position="615"/>
        <end position="681"/>
    </location>
</feature>
<feature type="compositionally biased region" description="Low complexity" evidence="4">
    <location>
        <begin position="646"/>
        <end position="667"/>
    </location>
</feature>
<feature type="compositionally biased region" description="Pro residues" evidence="4">
    <location>
        <begin position="668"/>
        <end position="677"/>
    </location>
</feature>
<feature type="binding site" evidence="11 12 14 15">
    <location>
        <begin position="11"/>
        <end position="12"/>
    </location>
    <ligand>
        <name>a 1,2-diacyl-sn-glycero-3-phospho-(1D-myo-inositol-3,4,5-trisphosphate)</name>
        <dbReference type="ChEBI" id="CHEBI:57836"/>
    </ligand>
</feature>
<feature type="binding site" evidence="11 12 14 15">
    <location>
        <position position="43"/>
    </location>
    <ligand>
        <name>a 1,2-diacyl-sn-glycero-3-phospho-(1D-myo-inositol-3,4,5-trisphosphate)</name>
        <dbReference type="ChEBI" id="CHEBI:57836"/>
    </ligand>
</feature>
<feature type="binding site" evidence="11 12 14 15">
    <location>
        <position position="53"/>
    </location>
    <ligand>
        <name>a 1,2-diacyl-sn-glycero-3-phospho-(1D-myo-inositol-3,4,5-trisphosphate)</name>
        <dbReference type="ChEBI" id="CHEBI:57836"/>
    </ligand>
</feature>
<feature type="binding site" evidence="11 12 14 15">
    <location>
        <begin position="57"/>
        <end position="61"/>
    </location>
    <ligand>
        <name>a 1,2-diacyl-sn-glycero-3-phospho-(1D-myo-inositol-3,4,5-trisphosphate)</name>
        <dbReference type="ChEBI" id="CHEBI:57836"/>
    </ligand>
</feature>
<feature type="helix" evidence="18">
    <location>
        <begin position="11"/>
        <end position="22"/>
    </location>
</feature>
<feature type="helix" evidence="18">
    <location>
        <begin position="26"/>
        <end position="43"/>
    </location>
</feature>
<feature type="strand" evidence="18">
    <location>
        <begin position="46"/>
        <end position="48"/>
    </location>
</feature>
<feature type="helix" evidence="18">
    <location>
        <begin position="52"/>
        <end position="67"/>
    </location>
</feature>
<feature type="helix" evidence="18">
    <location>
        <begin position="76"/>
        <end position="84"/>
    </location>
</feature>
<feature type="helix" evidence="18">
    <location>
        <begin position="88"/>
        <end position="100"/>
    </location>
</feature>
<feature type="helix" evidence="18">
    <location>
        <begin position="106"/>
        <end position="121"/>
    </location>
</feature>
<feature type="helix" evidence="18">
    <location>
        <begin position="125"/>
        <end position="138"/>
    </location>
</feature>
<feature type="helix" evidence="18">
    <location>
        <begin position="141"/>
        <end position="147"/>
    </location>
</feature>
<feature type="helix" evidence="18">
    <location>
        <begin position="150"/>
        <end position="156"/>
    </location>
</feature>
<feature type="strand" evidence="16">
    <location>
        <begin position="158"/>
        <end position="160"/>
    </location>
</feature>
<feature type="helix" evidence="18">
    <location>
        <begin position="162"/>
        <end position="178"/>
    </location>
</feature>
<feature type="helix" evidence="18">
    <location>
        <begin position="180"/>
        <end position="182"/>
    </location>
</feature>
<feature type="helix" evidence="18">
    <location>
        <begin position="189"/>
        <end position="195"/>
    </location>
</feature>
<feature type="helix" evidence="18">
    <location>
        <begin position="201"/>
        <end position="217"/>
    </location>
</feature>
<feature type="helix" evidence="18">
    <location>
        <begin position="219"/>
        <end position="222"/>
    </location>
</feature>
<feature type="helix" evidence="18">
    <location>
        <begin position="225"/>
        <end position="237"/>
    </location>
</feature>
<feature type="turn" evidence="20">
    <location>
        <begin position="240"/>
        <end position="242"/>
    </location>
</feature>
<feature type="strand" evidence="18">
    <location>
        <begin position="243"/>
        <end position="245"/>
    </location>
</feature>
<feature type="strand" evidence="20">
    <location>
        <begin position="248"/>
        <end position="251"/>
    </location>
</feature>
<feature type="strand" evidence="16">
    <location>
        <begin position="252"/>
        <end position="254"/>
    </location>
</feature>
<feature type="helix" evidence="18">
    <location>
        <begin position="255"/>
        <end position="264"/>
    </location>
</feature>
<feature type="helix" evidence="18">
    <location>
        <begin position="265"/>
        <end position="267"/>
    </location>
</feature>
<feature type="strand" evidence="18">
    <location>
        <begin position="268"/>
        <end position="270"/>
    </location>
</feature>
<feature type="helix" evidence="18">
    <location>
        <begin position="273"/>
        <end position="289"/>
    </location>
</feature>
<feature type="helix" evidence="18">
    <location>
        <begin position="299"/>
        <end position="319"/>
    </location>
</feature>
<feature type="helix" evidence="18">
    <location>
        <begin position="323"/>
        <end position="336"/>
    </location>
</feature>
<feature type="helix" evidence="18">
    <location>
        <begin position="342"/>
        <end position="355"/>
    </location>
</feature>
<feature type="strand" evidence="19">
    <location>
        <begin position="356"/>
        <end position="358"/>
    </location>
</feature>
<feature type="helix" evidence="18">
    <location>
        <begin position="359"/>
        <end position="366"/>
    </location>
</feature>
<feature type="helix" evidence="18">
    <location>
        <begin position="369"/>
        <end position="376"/>
    </location>
</feature>
<feature type="helix" evidence="18">
    <location>
        <begin position="382"/>
        <end position="394"/>
    </location>
</feature>
<feature type="turn" evidence="18">
    <location>
        <begin position="398"/>
        <end position="400"/>
    </location>
</feature>
<feature type="helix" evidence="18">
    <location>
        <begin position="401"/>
        <end position="413"/>
    </location>
</feature>
<feature type="helix" evidence="20">
    <location>
        <begin position="417"/>
        <end position="419"/>
    </location>
</feature>
<feature type="helix" evidence="18">
    <location>
        <begin position="420"/>
        <end position="434"/>
    </location>
</feature>
<feature type="helix" evidence="18">
    <location>
        <begin position="438"/>
        <end position="452"/>
    </location>
</feature>
<feature type="helix" evidence="18">
    <location>
        <begin position="453"/>
        <end position="455"/>
    </location>
</feature>
<feature type="helix" evidence="18">
    <location>
        <begin position="458"/>
        <end position="467"/>
    </location>
</feature>
<feature type="turn" evidence="18">
    <location>
        <begin position="468"/>
        <end position="470"/>
    </location>
</feature>
<feature type="helix" evidence="17">
    <location>
        <begin position="472"/>
        <end position="474"/>
    </location>
</feature>
<feature type="helix" evidence="18">
    <location>
        <begin position="475"/>
        <end position="486"/>
    </location>
</feature>
<feature type="strand" evidence="18">
    <location>
        <begin position="488"/>
        <end position="490"/>
    </location>
</feature>
<feature type="helix" evidence="18">
    <location>
        <begin position="493"/>
        <end position="506"/>
    </location>
</feature>
<feature type="helix" evidence="18">
    <location>
        <begin position="508"/>
        <end position="511"/>
    </location>
</feature>
<feature type="helix" evidence="18">
    <location>
        <begin position="514"/>
        <end position="516"/>
    </location>
</feature>
<feature type="helix" evidence="18">
    <location>
        <begin position="518"/>
        <end position="529"/>
    </location>
</feature>
<feature type="helix" evidence="18">
    <location>
        <begin position="534"/>
        <end position="550"/>
    </location>
</feature>
<feature type="helix" evidence="18">
    <location>
        <begin position="552"/>
        <end position="554"/>
    </location>
</feature>
<feature type="helix" evidence="18">
    <location>
        <begin position="555"/>
        <end position="563"/>
    </location>
</feature>
<feature type="helix" evidence="18">
    <location>
        <begin position="565"/>
        <end position="568"/>
    </location>
</feature>
<feature type="helix" evidence="18">
    <location>
        <begin position="573"/>
        <end position="585"/>
    </location>
</feature>
<feature type="helix" evidence="18">
    <location>
        <begin position="592"/>
        <end position="597"/>
    </location>
</feature>
<feature type="strand" evidence="16">
    <location>
        <begin position="598"/>
        <end position="600"/>
    </location>
</feature>
<feature type="helix" evidence="20">
    <location>
        <begin position="610"/>
        <end position="616"/>
    </location>
</feature>
<protein>
    <recommendedName>
        <fullName evidence="10">AP-2 complex subunit alpha-2</fullName>
    </recommendedName>
    <alternativeName>
        <fullName>100 kDa coated vesicle protein C</fullName>
    </alternativeName>
    <alternativeName>
        <fullName>Adaptor protein complex AP-2 subunit alpha-2</fullName>
    </alternativeName>
    <alternativeName>
        <fullName>Adaptor-related protein complex 2 subunit alpha-2</fullName>
    </alternativeName>
    <alternativeName>
        <fullName>Alpha-adaptin C</fullName>
    </alternativeName>
    <alternativeName>
        <fullName>Alpha2-adaptin</fullName>
    </alternativeName>
    <alternativeName>
        <fullName>Clathrin assembly protein complex 2 alpha-C large chain</fullName>
    </alternativeName>
    <alternativeName>
        <fullName>Plasma membrane adaptor HA2/AP2 adaptin alpha C subunit</fullName>
    </alternativeName>
</protein>
<name>AP2A2_RAT</name>
<comment type="function">
    <text evidence="1 3 6 7">Component of the adaptor protein complex 2 (AP-2). Adaptor protein complexes function in protein transport via transport vesicles in different membrane traffic pathways. Adaptor protein complexes are vesicle coat components and appear to be involved in cargo selection and vesicle formation. AP-2 is involved in clathrin-dependent endocytosis in which cargo proteins are incorporated into vesicles surrounded by clathrin (clathrin-coated vesicles, CCVs) which are destined for fusion with the early endosome. The clathrin lattice serves as a mechanical scaffold but is itself unable to bind directly to membrane components. Clathrin-associated adaptor protein (AP) complexes which can bind directly to both the clathrin lattice and to the lipid and protein components of membranes are considered to be the major clathrin adaptors contributing the CCV formation. AP-2 also serves as a cargo receptor to selectively sort the membrane proteins involved in receptor-mediated endocytosis. AP-2 seems to play a role in the recycling of synaptic vesicle membranes from the presynaptic surface. AP-2 recognizes Y-X-X-[FILMV] (Y-X-X-Phi) and [ED]-X-X-X-L-[LI] endocytosis signal motifs within the cytosolic tails of transmembrane cargo molecules. AP-2 may also play a role in maintaining normal post-endocytic trafficking through the ARF6-regulated, non-clathrin pathway. During long-term potentiation in hippocampal neurons, AP-2 is responsible for the endocytosis of ADAM10 (By similarity). The AP-2 alpha subunit binds polyphosphoinositide-containing lipids, positioning AP-2 on the membrane. The AP-2 alpha subunit acts via its C-terminal appendage domain as a scaffolding platform for endocytic accessory proteins. The AP-2 alpha and AP-2 sigma subunits are thought to contribute to the recognition of the [ED]-X-X-X-L-[LI] motif (By similarity).</text>
</comment>
<comment type="subunit">
    <text evidence="2 3 8">Adaptor protein complex 2 (AP-2) is a heterotetramer composed of two large adaptins (alpha-type subunit AP2A1 or AP2A2 and beta-type subunit AP2B1), a medium adaptin (mu-type subunit AP2M1) and a small adaptin (sigma-type subunit AP2S1). Interacts with clathrin (By similarity). Binds EPN1, EPS15, AMPH, SNAP91 and BIN1 (By similarity). Interacts with HIP1 (By similarity). Interacts with DGKD (By similarity). Interacts with DENND1A, DENND1B and DENND1C (By similarity). Interacts with FCHO1 and DAB2 (By similarity). Interacts with ATAT1; this interaction is required for efficient alpha-tubulin acetylation by ATAT1 (By similarity). Interacts with KIAA1107 (By similarity). Together with AP2B1 and AP2M1, it interacts with ADAM10; this interaction facilitates ADAM10 endocytosis from the plasma membrane during long-term potentiation in hippocampal neurons (By similarity). Interacts with CLN3 (via dileucine motif) (By similarity). Interacts with ABCB11; this interaction regulates cell membrane expression of ABCB11 through its internalization in a clathrin-dependent manner and its subsequent degradation (PubMed:22262466). Interacts with Cacfd1 (By similarity). Interacts with DNAJC6 (By similarity).</text>
</comment>
<comment type="interaction">
    <interactant intactId="EBI-539360">
        <id>P18484</id>
    </interactant>
    <interactant intactId="EBI-458098">
        <id>P21707</id>
        <label>Syt1</label>
    </interactant>
    <organismsDiffer>false</organismsDiffer>
    <experiments>5</experiments>
</comment>
<comment type="subcellular location">
    <subcellularLocation>
        <location evidence="3">Cell membrane</location>
        <topology evidence="3">Peripheral membrane protein</topology>
        <orientation evidence="3">Cytoplasmic side</orientation>
    </subcellularLocation>
    <subcellularLocation>
        <location evidence="3">Membrane</location>
        <location evidence="3">Coated pit</location>
        <topology evidence="3">Peripheral membrane protein</topology>
        <orientation evidence="3">Cytoplasmic side</orientation>
    </subcellularLocation>
    <text evidence="3">AP-2 appears to be excluded from internalizing CCVs and to disengage from sites of endocytosis seconds before internalization of the nascent CCV.</text>
</comment>
<comment type="tissue specificity">
    <text>Widely expressed.</text>
</comment>
<comment type="similarity">
    <text evidence="10">Belongs to the adaptor complexes large subunit family.</text>
</comment>
<reference key="1">
    <citation type="journal article" date="1990" name="Nucleic Acids Res.">
        <title>Sequence of the rat alpha c large chain of the clathrin associated protein complex AP-2.</title>
        <authorList>
            <person name="Tucker K.L."/>
            <person name="Nathanson K."/>
            <person name="Kirchhausen T."/>
        </authorList>
    </citation>
    <scope>NUCLEOTIDE SEQUENCE [MRNA]</scope>
</reference>
<reference key="2">
    <citation type="journal article" date="1989" name="Proc. Natl. Acad. Sci. U.S.A.">
        <title>Structural and functional division into two domains of the large (100- to 115-kDa) chains of the clathrin-associated protein complex AP-2.</title>
        <authorList>
            <person name="Kirchhausen T."/>
            <person name="Nathanson K.L."/>
            <person name="Matsui W."/>
            <person name="Vaisberg A."/>
            <person name="Chow E.P."/>
            <person name="Burne C."/>
            <person name="Keen J.H."/>
            <person name="Davis A.E."/>
        </authorList>
    </citation>
    <scope>PROTEIN SEQUENCE OF 2-18</scope>
    <source>
        <tissue>Brain</tissue>
    </source>
</reference>
<reference key="3">
    <citation type="journal article" date="1992" name="Biochem. Biophys. Res. Commun.">
        <title>Inositol hexakisphosphate receptor identified as the clathrin assembly protein AP-2.</title>
        <authorList>
            <person name="Voglmaier S.M."/>
            <person name="Keen J.H."/>
            <person name="Murphy J.E."/>
            <person name="Ferris C.D."/>
            <person name="Prestwich G.D."/>
            <person name="Snyder S.H."/>
            <person name="Theibert A.B."/>
        </authorList>
    </citation>
    <scope>PROTEIN SEQUENCE OF 2-18</scope>
</reference>
<reference key="4">
    <citation type="journal article" date="2003" name="Cell Struct. Funct.">
        <title>Adaptor protein complexes as the key regulators of protein sorting in the post-Golgi network.</title>
        <authorList>
            <person name="Nakatsu F."/>
            <person name="Ohno H."/>
        </authorList>
    </citation>
    <scope>FUNCTION OF THE AP-2 COMPLEX IN CLATHRIN-MEDIATED ENDOCYTOSIS</scope>
</reference>
<reference key="5">
    <citation type="journal article" date="2004" name="Annu. Rev. Cell Dev. Biol.">
        <title>Adaptors for clathrin coats: structure and function.</title>
        <authorList>
            <person name="Owen D.J."/>
            <person name="Collins B.M."/>
            <person name="Evans P.R."/>
        </authorList>
    </citation>
    <scope>FUNCTION OF THE AP-2 COMPLEX IN CLATHRIN-MEDIATED ENDOCYTOSIS</scope>
</reference>
<reference key="6">
    <citation type="journal article" date="2012" name="Hepatology">
        <title>AP2 adaptor complex mediates bile salt export pump internalization and modulates its hepatocanalicular expression and transport function.</title>
        <authorList>
            <person name="Hayashi H."/>
            <person name="Inamura K."/>
            <person name="Aida K."/>
            <person name="Naoi S."/>
            <person name="Horikawa R."/>
            <person name="Nagasaka H."/>
            <person name="Takatani T."/>
            <person name="Fukushima T."/>
            <person name="Hattori A."/>
            <person name="Yabuki T."/>
            <person name="Horii I."/>
            <person name="Sugiyama Y."/>
        </authorList>
    </citation>
    <scope>INTERACTION WITH ABCB11</scope>
</reference>
<reference evidence="14" key="7">
    <citation type="journal article" date="2002" name="Cell">
        <title>Molecular architecture and functional model of the endocytic AP2 complex.</title>
        <authorList>
            <person name="Collins B.M."/>
            <person name="McCoy A.J."/>
            <person name="Kent H.M."/>
            <person name="Evans P.R."/>
            <person name="Owen D.J."/>
        </authorList>
    </citation>
    <scope>X-RAY CRYSTALLOGRAPHY (2.60 ANGSTROMS) OF 1-620 IN COMPLEX WITH AP2B1; AP2M1; AP2S1 AND INOSITOL HEXAKISPHOSPHATE</scope>
</reference>
<reference evidence="15" key="8">
    <citation type="journal article" date="2014" name="Science">
        <title>Clathrin adaptors. AP2 controls clathrin polymerization with a membrane-activated switch.</title>
        <authorList>
            <person name="Kelly B.T."/>
            <person name="Graham S.C."/>
            <person name="Liska N."/>
            <person name="Dannhauser P.N."/>
            <person name="Honing S."/>
            <person name="Ungewickell E.J."/>
            <person name="Owen D.J."/>
        </authorList>
    </citation>
    <scope>X-RAY CRYSTALLOGRAPHY (2.79 ANGSTROMS) OF 1-620 IN COMPLEX WITH AP2B1; AP2M1; AP2S1 AND INOSITOL HEXAKISPHOSPHATE</scope>
</reference>
<organism>
    <name type="scientific">Rattus norvegicus</name>
    <name type="common">Rat</name>
    <dbReference type="NCBI Taxonomy" id="10116"/>
    <lineage>
        <taxon>Eukaryota</taxon>
        <taxon>Metazoa</taxon>
        <taxon>Chordata</taxon>
        <taxon>Craniata</taxon>
        <taxon>Vertebrata</taxon>
        <taxon>Euteleostomi</taxon>
        <taxon>Mammalia</taxon>
        <taxon>Eutheria</taxon>
        <taxon>Euarchontoglires</taxon>
        <taxon>Glires</taxon>
        <taxon>Rodentia</taxon>
        <taxon>Myomorpha</taxon>
        <taxon>Muroidea</taxon>
        <taxon>Muridae</taxon>
        <taxon>Murinae</taxon>
        <taxon>Rattus</taxon>
    </lineage>
</organism>
<accession>P18484</accession>
<sequence>MPAVSKGEGMRGLAVFISDIRNCKSKEAEIKRINKELANIRSKFKGDKALDGYSKKKYVCKLLFIFLLGHDIDFGHMEAVNLLSSNRYTEKQIGYLFISVLVNSNSELIRLINNAIKNDLASRNPTFMGLALHCIANVGSREMAEAFAGEIPKILVAGDTMDSVKQSAALCLLRLYRTSPDLVPMGDWTSRVVHLLNDQHLGVVTAATSLITTLAQKNPEEFKTSVSLAVSRLSRIVTSASTDLQDYTYYFVPAPWLSVKLLRLLQCYPPPDPAVRGRLTECLETILNKAQEPPKSKKVQHSNAKNAVLFEAISLIIHHDSEPNLLVRACNQLGQFLQHRETNLRYLALESMCTLASSEFSHEAVKTHIETVINALKTERDVSVRQRAVDLLYAMCDRSNAQQIVAEMLSYLETADYSIREEIVLKVAILAEKYAVDYTWYVDTILNLIRIAGDYVSEEVWYRVIQIVINRDDVQGYAAKTVFEALQAPACHENLVKVGGYILGEFGNLIAGDPRSSPLIQFNLLHSKFHLCSVPTRALLLSTYIKFVNLFPEVKATIQDVLRSDSQLKNADVELQQRAVEYLRLSTVASTDILATVLEEMPPFPERESSILAKLKKKKGPSTVTDLEETKRERSIDVNGGPEPVPASTSAASTPSPSADLLGLGAVPPAPTGPPPSSGGGLLVDVFSDSASAVAPLAPGSEDNFARFVCKNNGVLFENQLLQIGLKSEFRQNLGRMFIFYGNKTSTQFLNFTPTLICADDLQTNLNLQTKPVDPTVDGGAQVQQVINIECISDFTEAPVLNIQFRYGGTFQNVSVKLPITLNKFFQPTEMASQDFFQRWKQLSNPQQEVQNIFKAKHPMDTEITKAKIIGFGSALLEEVDPNPANFVGAGIIHTKTTQIGCLLRLEPNLQAQMYRLTLRTSKDTVSQRLCELLSEQF</sequence>
<keyword id="KW-0002">3D-structure</keyword>
<keyword id="KW-1003">Cell membrane</keyword>
<keyword id="KW-0168">Coated pit</keyword>
<keyword id="KW-0903">Direct protein sequencing</keyword>
<keyword id="KW-0254">Endocytosis</keyword>
<keyword id="KW-0446">Lipid-binding</keyword>
<keyword id="KW-0472">Membrane</keyword>
<keyword id="KW-0653">Protein transport</keyword>
<keyword id="KW-1185">Reference proteome</keyword>
<keyword id="KW-0813">Transport</keyword>
<evidence type="ECO:0000250" key="1"/>
<evidence type="ECO:0000250" key="2">
    <source>
        <dbReference type="UniProtKB" id="O94973"/>
    </source>
</evidence>
<evidence type="ECO:0000250" key="3">
    <source>
        <dbReference type="UniProtKB" id="P17427"/>
    </source>
</evidence>
<evidence type="ECO:0000256" key="4">
    <source>
        <dbReference type="SAM" id="MobiDB-lite"/>
    </source>
</evidence>
<evidence type="ECO:0000269" key="5">
    <source>
    </source>
</evidence>
<evidence type="ECO:0000269" key="6">
    <source>
    </source>
</evidence>
<evidence type="ECO:0000269" key="7">
    <source>
    </source>
</evidence>
<evidence type="ECO:0000269" key="8">
    <source>
    </source>
</evidence>
<evidence type="ECO:0000269" key="9">
    <source>
    </source>
</evidence>
<evidence type="ECO:0000305" key="10"/>
<evidence type="ECO:0000305" key="11">
    <source>
    </source>
</evidence>
<evidence type="ECO:0000305" key="12">
    <source>
    </source>
</evidence>
<evidence type="ECO:0000312" key="13">
    <source>
        <dbReference type="RGD" id="71015"/>
    </source>
</evidence>
<evidence type="ECO:0007744" key="14">
    <source>
        <dbReference type="PDB" id="2VGL"/>
    </source>
</evidence>
<evidence type="ECO:0007744" key="15">
    <source>
        <dbReference type="PDB" id="4UQI"/>
    </source>
</evidence>
<evidence type="ECO:0007829" key="16">
    <source>
        <dbReference type="PDB" id="2VGL"/>
    </source>
</evidence>
<evidence type="ECO:0007829" key="17">
    <source>
        <dbReference type="PDB" id="4UQI"/>
    </source>
</evidence>
<evidence type="ECO:0007829" key="18">
    <source>
        <dbReference type="PDB" id="6QH5"/>
    </source>
</evidence>
<evidence type="ECO:0007829" key="19">
    <source>
        <dbReference type="PDB" id="6QH7"/>
    </source>
</evidence>
<evidence type="ECO:0007829" key="20">
    <source>
        <dbReference type="PDB" id="6URI"/>
    </source>
</evidence>
<dbReference type="EMBL" id="X53773">
    <property type="protein sequence ID" value="CAA37791.1"/>
    <property type="molecule type" value="mRNA"/>
</dbReference>
<dbReference type="PIR" id="S11276">
    <property type="entry name" value="S11276"/>
</dbReference>
<dbReference type="PDB" id="2VGL">
    <property type="method" value="X-ray"/>
    <property type="resolution" value="2.59 A"/>
    <property type="chains" value="A=1-620"/>
</dbReference>
<dbReference type="PDB" id="2XA7">
    <property type="method" value="X-ray"/>
    <property type="resolution" value="3.10 A"/>
    <property type="chains" value="A=1-621"/>
</dbReference>
<dbReference type="PDB" id="4NEE">
    <property type="method" value="X-ray"/>
    <property type="resolution" value="2.88 A"/>
    <property type="chains" value="A/B/G/J=1-395"/>
</dbReference>
<dbReference type="PDB" id="4UQI">
    <property type="method" value="X-ray"/>
    <property type="resolution" value="2.79 A"/>
    <property type="chains" value="A=1-620"/>
</dbReference>
<dbReference type="PDB" id="6OWT">
    <property type="method" value="EM"/>
    <property type="resolution" value="3.80 A"/>
    <property type="chains" value="A=1-938"/>
</dbReference>
<dbReference type="PDB" id="6QH5">
    <property type="method" value="X-ray"/>
    <property type="resolution" value="2.56 A"/>
    <property type="chains" value="A=1-620"/>
</dbReference>
<dbReference type="PDB" id="6QH6">
    <property type="method" value="X-ray"/>
    <property type="resolution" value="5.00 A"/>
    <property type="chains" value="A=1-620"/>
</dbReference>
<dbReference type="PDB" id="6QH7">
    <property type="method" value="X-ray"/>
    <property type="resolution" value="3.40 A"/>
    <property type="chains" value="A=1-620"/>
</dbReference>
<dbReference type="PDB" id="6URI">
    <property type="method" value="X-ray"/>
    <property type="resolution" value="3.00 A"/>
    <property type="chains" value="A=1-620"/>
</dbReference>
<dbReference type="PDB" id="6YAE">
    <property type="method" value="EM"/>
    <property type="resolution" value="3.90 A"/>
    <property type="chains" value="A=1-620"/>
</dbReference>
<dbReference type="PDB" id="6YAF">
    <property type="method" value="EM"/>
    <property type="resolution" value="9.10 A"/>
    <property type="chains" value="A=1-622"/>
</dbReference>
<dbReference type="PDB" id="6YAH">
    <property type="method" value="EM"/>
    <property type="resolution" value="10.20 A"/>
    <property type="chains" value="A=1-622"/>
</dbReference>
<dbReference type="PDB" id="7OG1">
    <property type="method" value="X-ray"/>
    <property type="resolution" value="3.25 A"/>
    <property type="chains" value="AAA=1-620"/>
</dbReference>
<dbReference type="PDB" id="7OHO">
    <property type="method" value="X-ray"/>
    <property type="resolution" value="2.88 A"/>
    <property type="chains" value="AAA=1-620"/>
</dbReference>
<dbReference type="PDB" id="7Z5C">
    <property type="method" value="EM"/>
    <property type="resolution" value="4.16 A"/>
    <property type="chains" value="A=1-620"/>
</dbReference>
<dbReference type="PDBsum" id="2VGL"/>
<dbReference type="PDBsum" id="2XA7"/>
<dbReference type="PDBsum" id="4NEE"/>
<dbReference type="PDBsum" id="4UQI"/>
<dbReference type="PDBsum" id="6OWT"/>
<dbReference type="PDBsum" id="6QH5"/>
<dbReference type="PDBsum" id="6QH6"/>
<dbReference type="PDBsum" id="6QH7"/>
<dbReference type="PDBsum" id="6URI"/>
<dbReference type="PDBsum" id="6YAE"/>
<dbReference type="PDBsum" id="6YAF"/>
<dbReference type="PDBsum" id="6YAH"/>
<dbReference type="PDBsum" id="7OG1"/>
<dbReference type="PDBsum" id="7OHO"/>
<dbReference type="PDBsum" id="7Z5C"/>
<dbReference type="BMRB" id="P18484"/>
<dbReference type="EMDB" id="EMD-10748"/>
<dbReference type="EMDB" id="EMD-10751"/>
<dbReference type="EMDB" id="EMD-14517"/>
<dbReference type="EMDB" id="EMD-14525"/>
<dbReference type="EMDB" id="EMD-14526"/>
<dbReference type="SMR" id="P18484"/>
<dbReference type="CORUM" id="P18484"/>
<dbReference type="DIP" id="DIP-29765N"/>
<dbReference type="FunCoup" id="P18484">
    <property type="interactions" value="3651"/>
</dbReference>
<dbReference type="IntAct" id="P18484">
    <property type="interactions" value="14"/>
</dbReference>
<dbReference type="MINT" id="P18484"/>
<dbReference type="STRING" id="10116.ENSRNOP00000060992"/>
<dbReference type="CarbonylDB" id="P18484"/>
<dbReference type="GlyGen" id="P18484">
    <property type="glycosylation" value="3 sites, 1 O-linked glycan (1 site)"/>
</dbReference>
<dbReference type="PhosphoSitePlus" id="P18484"/>
<dbReference type="jPOST" id="P18484"/>
<dbReference type="PaxDb" id="10116-ENSRNOP00000060992"/>
<dbReference type="PeptideAtlas" id="P18484"/>
<dbReference type="UCSC" id="RGD:71015">
    <property type="organism name" value="rat"/>
</dbReference>
<dbReference type="AGR" id="RGD:71015"/>
<dbReference type="RGD" id="71015">
    <property type="gene designation" value="Ap2a2"/>
</dbReference>
<dbReference type="eggNOG" id="KOG1077">
    <property type="taxonomic scope" value="Eukaryota"/>
</dbReference>
<dbReference type="InParanoid" id="P18484"/>
<dbReference type="Reactome" id="R-RNO-177504">
    <property type="pathway name" value="Retrograde neurotrophin signalling"/>
</dbReference>
<dbReference type="Reactome" id="R-RNO-2132295">
    <property type="pathway name" value="MHC class II antigen presentation"/>
</dbReference>
<dbReference type="Reactome" id="R-RNO-416993">
    <property type="pathway name" value="Trafficking of GluR2-containing AMPA receptors"/>
</dbReference>
<dbReference type="Reactome" id="R-RNO-437239">
    <property type="pathway name" value="Recycling pathway of L1"/>
</dbReference>
<dbReference type="Reactome" id="R-RNO-5099900">
    <property type="pathway name" value="WNT5A-dependent internalization of FZD4"/>
</dbReference>
<dbReference type="Reactome" id="R-RNO-5140745">
    <property type="pathway name" value="WNT5A-dependent internalization of FZD2, FZD5 and ROR2"/>
</dbReference>
<dbReference type="Reactome" id="R-RNO-6798695">
    <property type="pathway name" value="Neutrophil degranulation"/>
</dbReference>
<dbReference type="Reactome" id="R-RNO-8856825">
    <property type="pathway name" value="Cargo recognition for clathrin-mediated endocytosis"/>
</dbReference>
<dbReference type="Reactome" id="R-RNO-8856828">
    <property type="pathway name" value="Clathrin-mediated endocytosis"/>
</dbReference>
<dbReference type="Reactome" id="R-RNO-8866427">
    <property type="pathway name" value="VLDLR internalisation and degradation"/>
</dbReference>
<dbReference type="Reactome" id="R-RNO-8964038">
    <property type="pathway name" value="LDL clearance"/>
</dbReference>
<dbReference type="EvolutionaryTrace" id="P18484"/>
<dbReference type="PRO" id="PR:P18484"/>
<dbReference type="Proteomes" id="UP000002494">
    <property type="component" value="Unplaced"/>
</dbReference>
<dbReference type="GO" id="GO:0030122">
    <property type="term" value="C:AP-2 adaptor complex"/>
    <property type="evidence" value="ECO:0000315"/>
    <property type="project" value="CAFA"/>
</dbReference>
<dbReference type="GO" id="GO:0031410">
    <property type="term" value="C:cytoplasmic vesicle"/>
    <property type="evidence" value="ECO:0000266"/>
    <property type="project" value="RGD"/>
</dbReference>
<dbReference type="GO" id="GO:0030117">
    <property type="term" value="C:membrane coat"/>
    <property type="evidence" value="ECO:0000266"/>
    <property type="project" value="RGD"/>
</dbReference>
<dbReference type="GO" id="GO:0005886">
    <property type="term" value="C:plasma membrane"/>
    <property type="evidence" value="ECO:0000304"/>
    <property type="project" value="Reactome"/>
</dbReference>
<dbReference type="GO" id="GO:0045202">
    <property type="term" value="C:synapse"/>
    <property type="evidence" value="ECO:0000314"/>
    <property type="project" value="SynGO"/>
</dbReference>
<dbReference type="GO" id="GO:0008021">
    <property type="term" value="C:synaptic vesicle"/>
    <property type="evidence" value="ECO:0000314"/>
    <property type="project" value="RGD"/>
</dbReference>
<dbReference type="GO" id="GO:0035615">
    <property type="term" value="F:clathrin adaptor activity"/>
    <property type="evidence" value="ECO:0000318"/>
    <property type="project" value="GO_Central"/>
</dbReference>
<dbReference type="GO" id="GO:0097718">
    <property type="term" value="F:disordered domain specific binding"/>
    <property type="evidence" value="ECO:0000266"/>
    <property type="project" value="RGD"/>
</dbReference>
<dbReference type="GO" id="GO:0019900">
    <property type="term" value="F:kinase binding"/>
    <property type="evidence" value="ECO:0000266"/>
    <property type="project" value="RGD"/>
</dbReference>
<dbReference type="GO" id="GO:0035091">
    <property type="term" value="F:phosphatidylinositol binding"/>
    <property type="evidence" value="ECO:0000315"/>
    <property type="project" value="CAFA"/>
</dbReference>
<dbReference type="GO" id="GO:0019904">
    <property type="term" value="F:protein domain specific binding"/>
    <property type="evidence" value="ECO:0000266"/>
    <property type="project" value="RGD"/>
</dbReference>
<dbReference type="GO" id="GO:0019901">
    <property type="term" value="F:protein kinase binding"/>
    <property type="evidence" value="ECO:0000266"/>
    <property type="project" value="RGD"/>
</dbReference>
<dbReference type="GO" id="GO:0120283">
    <property type="term" value="F:protein serine/threonine kinase binding"/>
    <property type="evidence" value="ECO:0000353"/>
    <property type="project" value="RGD"/>
</dbReference>
<dbReference type="GO" id="GO:0044877">
    <property type="term" value="F:protein-containing complex binding"/>
    <property type="evidence" value="ECO:0000353"/>
    <property type="project" value="RGD"/>
</dbReference>
<dbReference type="GO" id="GO:0072583">
    <property type="term" value="P:clathrin-dependent endocytosis"/>
    <property type="evidence" value="ECO:0000250"/>
    <property type="project" value="UniProtKB"/>
</dbReference>
<dbReference type="GO" id="GO:0006886">
    <property type="term" value="P:intracellular protein transport"/>
    <property type="evidence" value="ECO:0007669"/>
    <property type="project" value="InterPro"/>
</dbReference>
<dbReference type="GO" id="GO:0048488">
    <property type="term" value="P:synaptic vesicle endocytosis"/>
    <property type="evidence" value="ECO:0000266"/>
    <property type="project" value="RGD"/>
</dbReference>
<dbReference type="FunFam" id="1.25.10.10:FF:000020">
    <property type="entry name" value="AP-2 complex subunit alpha"/>
    <property type="match status" value="1"/>
</dbReference>
<dbReference type="FunFam" id="2.60.40.1230:FF:000003">
    <property type="entry name" value="AP-2 complex subunit alpha"/>
    <property type="match status" value="1"/>
</dbReference>
<dbReference type="FunFam" id="3.30.310.10:FF:000004">
    <property type="entry name" value="AP-2 complex subunit alpha"/>
    <property type="match status" value="1"/>
</dbReference>
<dbReference type="Gene3D" id="2.60.40.1230">
    <property type="match status" value="1"/>
</dbReference>
<dbReference type="Gene3D" id="1.25.10.10">
    <property type="entry name" value="Leucine-rich Repeat Variant"/>
    <property type="match status" value="1"/>
</dbReference>
<dbReference type="Gene3D" id="3.30.310.10">
    <property type="entry name" value="TATA-Binding Protein"/>
    <property type="match status" value="1"/>
</dbReference>
<dbReference type="IDEAL" id="IID50129"/>
<dbReference type="InterPro" id="IPR050840">
    <property type="entry name" value="Adaptor_Complx_Large_Subunit"/>
</dbReference>
<dbReference type="InterPro" id="IPR017104">
    <property type="entry name" value="AP2_complex_asu"/>
</dbReference>
<dbReference type="InterPro" id="IPR011989">
    <property type="entry name" value="ARM-like"/>
</dbReference>
<dbReference type="InterPro" id="IPR016024">
    <property type="entry name" value="ARM-type_fold"/>
</dbReference>
<dbReference type="InterPro" id="IPR002553">
    <property type="entry name" value="Clathrin/coatomer_adapt-like_N"/>
</dbReference>
<dbReference type="InterPro" id="IPR003164">
    <property type="entry name" value="Clathrin_a-adaptin_app_sub_C"/>
</dbReference>
<dbReference type="InterPro" id="IPR008152">
    <property type="entry name" value="Clathrin_a/b/g-adaptin_app_Ig"/>
</dbReference>
<dbReference type="InterPro" id="IPR013041">
    <property type="entry name" value="Clathrin_app_Ig-like_sf"/>
</dbReference>
<dbReference type="InterPro" id="IPR009028">
    <property type="entry name" value="Coatomer/calthrin_app_sub_C"/>
</dbReference>
<dbReference type="InterPro" id="IPR012295">
    <property type="entry name" value="TBP_dom_sf"/>
</dbReference>
<dbReference type="PANTHER" id="PTHR22780">
    <property type="entry name" value="ADAPTIN, ALPHA/GAMMA/EPSILON"/>
    <property type="match status" value="1"/>
</dbReference>
<dbReference type="Pfam" id="PF01602">
    <property type="entry name" value="Adaptin_N"/>
    <property type="match status" value="1"/>
</dbReference>
<dbReference type="Pfam" id="PF02296">
    <property type="entry name" value="Alpha_adaptin_C"/>
    <property type="match status" value="1"/>
</dbReference>
<dbReference type="Pfam" id="PF02883">
    <property type="entry name" value="Alpha_adaptinC2"/>
    <property type="match status" value="1"/>
</dbReference>
<dbReference type="PIRSF" id="PIRSF037091">
    <property type="entry name" value="AP2_complex_alpha"/>
    <property type="match status" value="1"/>
</dbReference>
<dbReference type="SMART" id="SM00809">
    <property type="entry name" value="Alpha_adaptinC2"/>
    <property type="match status" value="1"/>
</dbReference>
<dbReference type="SUPFAM" id="SSF48371">
    <property type="entry name" value="ARM repeat"/>
    <property type="match status" value="1"/>
</dbReference>
<dbReference type="SUPFAM" id="SSF49348">
    <property type="entry name" value="Clathrin adaptor appendage domain"/>
    <property type="match status" value="1"/>
</dbReference>
<dbReference type="SUPFAM" id="SSF55711">
    <property type="entry name" value="Subdomain of clathrin and coatomer appendage domain"/>
    <property type="match status" value="1"/>
</dbReference>
<gene>
    <name evidence="13" type="primary">Ap2a2</name>
    <name type="synonym">Adtab</name>
</gene>